<sequence>MPEAAPPVADARGSSPTATTGPGADATLSAVEPFLAHLQIERQVSAHTLDAYRRDLAALIGWASAQGSEDVAQLDSAQLRKFVTAEHRRGLSPKSLQRRLSACRSYYAWLLKHGRIATSPAAALRAPKAPRKLPQVLDADEAVRLVEVPTDAPLGLRDRALLELFYSSGLRLSELCALRWRDLDLDSGLVTVLGKGGKQRLVPVGSHAVAALRAWQRDSGGSAQTHVFPGRAGGAISQRAVQIRIKQLAVRQGMFKHVHPHMLRHSFASHILESSGDLRGVQELLGHSDIATTQIYTHLDFQHLAKVYDAAHPRAKRKKATE</sequence>
<organism>
    <name type="scientific">Xanthomonas campestris pv. campestris (strain B100)</name>
    <dbReference type="NCBI Taxonomy" id="509169"/>
    <lineage>
        <taxon>Bacteria</taxon>
        <taxon>Pseudomonadati</taxon>
        <taxon>Pseudomonadota</taxon>
        <taxon>Gammaproteobacteria</taxon>
        <taxon>Lysobacterales</taxon>
        <taxon>Lysobacteraceae</taxon>
        <taxon>Xanthomonas</taxon>
    </lineage>
</organism>
<comment type="function">
    <text evidence="1">Site-specific tyrosine recombinase, which acts by catalyzing the cutting and rejoining of the recombining DNA molecules. The XerC-XerD complex is essential to convert dimers of the bacterial chromosome into monomers to permit their segregation at cell division. It also contributes to the segregational stability of plasmids.</text>
</comment>
<comment type="subunit">
    <text evidence="1">Forms a cyclic heterotetrameric complex composed of two molecules of XerC and two molecules of XerD.</text>
</comment>
<comment type="subcellular location">
    <subcellularLocation>
        <location evidence="1">Cytoplasm</location>
    </subcellularLocation>
</comment>
<comment type="similarity">
    <text evidence="1">Belongs to the 'phage' integrase family. XerC subfamily.</text>
</comment>
<accession>B0RNK3</accession>
<proteinExistence type="inferred from homology"/>
<protein>
    <recommendedName>
        <fullName evidence="1">Tyrosine recombinase XerC</fullName>
    </recommendedName>
</protein>
<reference key="1">
    <citation type="journal article" date="2008" name="J. Biotechnol.">
        <title>The genome of Xanthomonas campestris pv. campestris B100 and its use for the reconstruction of metabolic pathways involved in xanthan biosynthesis.</title>
        <authorList>
            <person name="Vorhoelter F.-J."/>
            <person name="Schneiker S."/>
            <person name="Goesmann A."/>
            <person name="Krause L."/>
            <person name="Bekel T."/>
            <person name="Kaiser O."/>
            <person name="Linke B."/>
            <person name="Patschkowski T."/>
            <person name="Rueckert C."/>
            <person name="Schmid J."/>
            <person name="Sidhu V.K."/>
            <person name="Sieber V."/>
            <person name="Tauch A."/>
            <person name="Watt S.A."/>
            <person name="Weisshaar B."/>
            <person name="Becker A."/>
            <person name="Niehaus K."/>
            <person name="Puehler A."/>
        </authorList>
    </citation>
    <scope>NUCLEOTIDE SEQUENCE [LARGE SCALE GENOMIC DNA]</scope>
    <source>
        <strain>B100</strain>
    </source>
</reference>
<dbReference type="EMBL" id="AM920689">
    <property type="protein sequence ID" value="CAP50038.1"/>
    <property type="molecule type" value="Genomic_DNA"/>
</dbReference>
<dbReference type="SMR" id="B0RNK3"/>
<dbReference type="KEGG" id="xca:xcc-b100_0699"/>
<dbReference type="HOGENOM" id="CLU_027562_9_0_6"/>
<dbReference type="Proteomes" id="UP000001188">
    <property type="component" value="Chromosome"/>
</dbReference>
<dbReference type="GO" id="GO:0005737">
    <property type="term" value="C:cytoplasm"/>
    <property type="evidence" value="ECO:0007669"/>
    <property type="project" value="UniProtKB-SubCell"/>
</dbReference>
<dbReference type="GO" id="GO:0003677">
    <property type="term" value="F:DNA binding"/>
    <property type="evidence" value="ECO:0007669"/>
    <property type="project" value="UniProtKB-KW"/>
</dbReference>
<dbReference type="GO" id="GO:0009037">
    <property type="term" value="F:tyrosine-based site-specific recombinase activity"/>
    <property type="evidence" value="ECO:0007669"/>
    <property type="project" value="UniProtKB-UniRule"/>
</dbReference>
<dbReference type="GO" id="GO:0051301">
    <property type="term" value="P:cell division"/>
    <property type="evidence" value="ECO:0007669"/>
    <property type="project" value="UniProtKB-KW"/>
</dbReference>
<dbReference type="GO" id="GO:0007059">
    <property type="term" value="P:chromosome segregation"/>
    <property type="evidence" value="ECO:0007669"/>
    <property type="project" value="UniProtKB-UniRule"/>
</dbReference>
<dbReference type="GO" id="GO:0006313">
    <property type="term" value="P:DNA transposition"/>
    <property type="evidence" value="ECO:0007669"/>
    <property type="project" value="UniProtKB-UniRule"/>
</dbReference>
<dbReference type="CDD" id="cd00798">
    <property type="entry name" value="INT_XerDC_C"/>
    <property type="match status" value="1"/>
</dbReference>
<dbReference type="Gene3D" id="1.10.150.130">
    <property type="match status" value="1"/>
</dbReference>
<dbReference type="Gene3D" id="1.10.443.10">
    <property type="entry name" value="Intergrase catalytic core"/>
    <property type="match status" value="1"/>
</dbReference>
<dbReference type="HAMAP" id="MF_01808">
    <property type="entry name" value="Recomb_XerC_XerD"/>
    <property type="match status" value="1"/>
</dbReference>
<dbReference type="InterPro" id="IPR044068">
    <property type="entry name" value="CB"/>
</dbReference>
<dbReference type="InterPro" id="IPR011010">
    <property type="entry name" value="DNA_brk_join_enz"/>
</dbReference>
<dbReference type="InterPro" id="IPR013762">
    <property type="entry name" value="Integrase-like_cat_sf"/>
</dbReference>
<dbReference type="InterPro" id="IPR002104">
    <property type="entry name" value="Integrase_catalytic"/>
</dbReference>
<dbReference type="InterPro" id="IPR010998">
    <property type="entry name" value="Integrase_recombinase_N"/>
</dbReference>
<dbReference type="InterPro" id="IPR004107">
    <property type="entry name" value="Integrase_SAM-like_N"/>
</dbReference>
<dbReference type="InterPro" id="IPR011931">
    <property type="entry name" value="Recomb_XerC"/>
</dbReference>
<dbReference type="InterPro" id="IPR023009">
    <property type="entry name" value="Tyrosine_recombinase_XerC/XerD"/>
</dbReference>
<dbReference type="InterPro" id="IPR050090">
    <property type="entry name" value="Tyrosine_recombinase_XerCD"/>
</dbReference>
<dbReference type="NCBIfam" id="NF001399">
    <property type="entry name" value="PRK00283.1"/>
    <property type="match status" value="1"/>
</dbReference>
<dbReference type="NCBIfam" id="TIGR02224">
    <property type="entry name" value="recomb_XerC"/>
    <property type="match status" value="1"/>
</dbReference>
<dbReference type="PANTHER" id="PTHR30349">
    <property type="entry name" value="PHAGE INTEGRASE-RELATED"/>
    <property type="match status" value="1"/>
</dbReference>
<dbReference type="PANTHER" id="PTHR30349:SF81">
    <property type="entry name" value="TYROSINE RECOMBINASE XERC"/>
    <property type="match status" value="1"/>
</dbReference>
<dbReference type="Pfam" id="PF02899">
    <property type="entry name" value="Phage_int_SAM_1"/>
    <property type="match status" value="1"/>
</dbReference>
<dbReference type="Pfam" id="PF00589">
    <property type="entry name" value="Phage_integrase"/>
    <property type="match status" value="1"/>
</dbReference>
<dbReference type="SUPFAM" id="SSF56349">
    <property type="entry name" value="DNA breaking-rejoining enzymes"/>
    <property type="match status" value="1"/>
</dbReference>
<dbReference type="PROSITE" id="PS51900">
    <property type="entry name" value="CB"/>
    <property type="match status" value="1"/>
</dbReference>
<dbReference type="PROSITE" id="PS51898">
    <property type="entry name" value="TYR_RECOMBINASE"/>
    <property type="match status" value="1"/>
</dbReference>
<keyword id="KW-0131">Cell cycle</keyword>
<keyword id="KW-0132">Cell division</keyword>
<keyword id="KW-0159">Chromosome partition</keyword>
<keyword id="KW-0963">Cytoplasm</keyword>
<keyword id="KW-0229">DNA integration</keyword>
<keyword id="KW-0233">DNA recombination</keyword>
<keyword id="KW-0238">DNA-binding</keyword>
<gene>
    <name evidence="1" type="primary">xerC</name>
    <name type="ordered locus">xcc-b100_0699</name>
</gene>
<evidence type="ECO:0000255" key="1">
    <source>
        <dbReference type="HAMAP-Rule" id="MF_01808"/>
    </source>
</evidence>
<evidence type="ECO:0000255" key="2">
    <source>
        <dbReference type="PROSITE-ProRule" id="PRU01246"/>
    </source>
</evidence>
<evidence type="ECO:0000255" key="3">
    <source>
        <dbReference type="PROSITE-ProRule" id="PRU01248"/>
    </source>
</evidence>
<evidence type="ECO:0000256" key="4">
    <source>
        <dbReference type="SAM" id="MobiDB-lite"/>
    </source>
</evidence>
<name>XERC_XANCB</name>
<feature type="chain" id="PRO_1000187620" description="Tyrosine recombinase XerC">
    <location>
        <begin position="1"/>
        <end position="322"/>
    </location>
</feature>
<feature type="domain" description="Core-binding (CB)" evidence="3">
    <location>
        <begin position="25"/>
        <end position="111"/>
    </location>
</feature>
<feature type="domain" description="Tyr recombinase" evidence="2">
    <location>
        <begin position="132"/>
        <end position="309"/>
    </location>
</feature>
<feature type="region of interest" description="Disordered" evidence="4">
    <location>
        <begin position="1"/>
        <end position="25"/>
    </location>
</feature>
<feature type="compositionally biased region" description="Low complexity" evidence="4">
    <location>
        <begin position="16"/>
        <end position="25"/>
    </location>
</feature>
<feature type="active site" evidence="1">
    <location>
        <position position="171"/>
    </location>
</feature>
<feature type="active site" evidence="1">
    <location>
        <position position="195"/>
    </location>
</feature>
<feature type="active site" evidence="1">
    <location>
        <position position="261"/>
    </location>
</feature>
<feature type="active site" evidence="1">
    <location>
        <position position="264"/>
    </location>
</feature>
<feature type="active site" evidence="1">
    <location>
        <position position="287"/>
    </location>
</feature>
<feature type="active site" description="O-(3'-phospho-DNA)-tyrosine intermediate" evidence="1">
    <location>
        <position position="296"/>
    </location>
</feature>